<proteinExistence type="evidence at transcript level"/>
<reference key="1">
    <citation type="journal article" date="1999" name="Mol. Biol. Evol.">
        <title>Concerted evolution within a trypsin gene cluster in Drosophila.</title>
        <authorList>
            <person name="Wang S."/>
            <person name="Magoulas C."/>
            <person name="Hickey D.A."/>
        </authorList>
    </citation>
    <scope>NUCLEOTIDE SEQUENCE [GENOMIC DNA]</scope>
    <source>
        <strain>Oregon-R</strain>
    </source>
</reference>
<reference key="2">
    <citation type="journal article" date="2000" name="Science">
        <title>The genome sequence of Drosophila melanogaster.</title>
        <authorList>
            <person name="Adams M.D."/>
            <person name="Celniker S.E."/>
            <person name="Holt R.A."/>
            <person name="Evans C.A."/>
            <person name="Gocayne J.D."/>
            <person name="Amanatides P.G."/>
            <person name="Scherer S.E."/>
            <person name="Li P.W."/>
            <person name="Hoskins R.A."/>
            <person name="Galle R.F."/>
            <person name="George R.A."/>
            <person name="Lewis S.E."/>
            <person name="Richards S."/>
            <person name="Ashburner M."/>
            <person name="Henderson S.N."/>
            <person name="Sutton G.G."/>
            <person name="Wortman J.R."/>
            <person name="Yandell M.D."/>
            <person name="Zhang Q."/>
            <person name="Chen L.X."/>
            <person name="Brandon R.C."/>
            <person name="Rogers Y.-H.C."/>
            <person name="Blazej R.G."/>
            <person name="Champe M."/>
            <person name="Pfeiffer B.D."/>
            <person name="Wan K.H."/>
            <person name="Doyle C."/>
            <person name="Baxter E.G."/>
            <person name="Helt G."/>
            <person name="Nelson C.R."/>
            <person name="Miklos G.L.G."/>
            <person name="Abril J.F."/>
            <person name="Agbayani A."/>
            <person name="An H.-J."/>
            <person name="Andrews-Pfannkoch C."/>
            <person name="Baldwin D."/>
            <person name="Ballew R.M."/>
            <person name="Basu A."/>
            <person name="Baxendale J."/>
            <person name="Bayraktaroglu L."/>
            <person name="Beasley E.M."/>
            <person name="Beeson K.Y."/>
            <person name="Benos P.V."/>
            <person name="Berman B.P."/>
            <person name="Bhandari D."/>
            <person name="Bolshakov S."/>
            <person name="Borkova D."/>
            <person name="Botchan M.R."/>
            <person name="Bouck J."/>
            <person name="Brokstein P."/>
            <person name="Brottier P."/>
            <person name="Burtis K.C."/>
            <person name="Busam D.A."/>
            <person name="Butler H."/>
            <person name="Cadieu E."/>
            <person name="Center A."/>
            <person name="Chandra I."/>
            <person name="Cherry J.M."/>
            <person name="Cawley S."/>
            <person name="Dahlke C."/>
            <person name="Davenport L.B."/>
            <person name="Davies P."/>
            <person name="de Pablos B."/>
            <person name="Delcher A."/>
            <person name="Deng Z."/>
            <person name="Mays A.D."/>
            <person name="Dew I."/>
            <person name="Dietz S.M."/>
            <person name="Dodson K."/>
            <person name="Doup L.E."/>
            <person name="Downes M."/>
            <person name="Dugan-Rocha S."/>
            <person name="Dunkov B.C."/>
            <person name="Dunn P."/>
            <person name="Durbin K.J."/>
            <person name="Evangelista C.C."/>
            <person name="Ferraz C."/>
            <person name="Ferriera S."/>
            <person name="Fleischmann W."/>
            <person name="Fosler C."/>
            <person name="Gabrielian A.E."/>
            <person name="Garg N.S."/>
            <person name="Gelbart W.M."/>
            <person name="Glasser K."/>
            <person name="Glodek A."/>
            <person name="Gong F."/>
            <person name="Gorrell J.H."/>
            <person name="Gu Z."/>
            <person name="Guan P."/>
            <person name="Harris M."/>
            <person name="Harris N.L."/>
            <person name="Harvey D.A."/>
            <person name="Heiman T.J."/>
            <person name="Hernandez J.R."/>
            <person name="Houck J."/>
            <person name="Hostin D."/>
            <person name="Houston K.A."/>
            <person name="Howland T.J."/>
            <person name="Wei M.-H."/>
            <person name="Ibegwam C."/>
            <person name="Jalali M."/>
            <person name="Kalush F."/>
            <person name="Karpen G.H."/>
            <person name="Ke Z."/>
            <person name="Kennison J.A."/>
            <person name="Ketchum K.A."/>
            <person name="Kimmel B.E."/>
            <person name="Kodira C.D."/>
            <person name="Kraft C.L."/>
            <person name="Kravitz S."/>
            <person name="Kulp D."/>
            <person name="Lai Z."/>
            <person name="Lasko P."/>
            <person name="Lei Y."/>
            <person name="Levitsky A.A."/>
            <person name="Li J.H."/>
            <person name="Li Z."/>
            <person name="Liang Y."/>
            <person name="Lin X."/>
            <person name="Liu X."/>
            <person name="Mattei B."/>
            <person name="McIntosh T.C."/>
            <person name="McLeod M.P."/>
            <person name="McPherson D."/>
            <person name="Merkulov G."/>
            <person name="Milshina N.V."/>
            <person name="Mobarry C."/>
            <person name="Morris J."/>
            <person name="Moshrefi A."/>
            <person name="Mount S.M."/>
            <person name="Moy M."/>
            <person name="Murphy B."/>
            <person name="Murphy L."/>
            <person name="Muzny D.M."/>
            <person name="Nelson D.L."/>
            <person name="Nelson D.R."/>
            <person name="Nelson K.A."/>
            <person name="Nixon K."/>
            <person name="Nusskern D.R."/>
            <person name="Pacleb J.M."/>
            <person name="Palazzolo M."/>
            <person name="Pittman G.S."/>
            <person name="Pan S."/>
            <person name="Pollard J."/>
            <person name="Puri V."/>
            <person name="Reese M.G."/>
            <person name="Reinert K."/>
            <person name="Remington K."/>
            <person name="Saunders R.D.C."/>
            <person name="Scheeler F."/>
            <person name="Shen H."/>
            <person name="Shue B.C."/>
            <person name="Siden-Kiamos I."/>
            <person name="Simpson M."/>
            <person name="Skupski M.P."/>
            <person name="Smith T.J."/>
            <person name="Spier E."/>
            <person name="Spradling A.C."/>
            <person name="Stapleton M."/>
            <person name="Strong R."/>
            <person name="Sun E."/>
            <person name="Svirskas R."/>
            <person name="Tector C."/>
            <person name="Turner R."/>
            <person name="Venter E."/>
            <person name="Wang A.H."/>
            <person name="Wang X."/>
            <person name="Wang Z.-Y."/>
            <person name="Wassarman D.A."/>
            <person name="Weinstock G.M."/>
            <person name="Weissenbach J."/>
            <person name="Williams S.M."/>
            <person name="Woodage T."/>
            <person name="Worley K.C."/>
            <person name="Wu D."/>
            <person name="Yang S."/>
            <person name="Yao Q.A."/>
            <person name="Ye J."/>
            <person name="Yeh R.-F."/>
            <person name="Zaveri J.S."/>
            <person name="Zhan M."/>
            <person name="Zhang G."/>
            <person name="Zhao Q."/>
            <person name="Zheng L."/>
            <person name="Zheng X.H."/>
            <person name="Zhong F.N."/>
            <person name="Zhong W."/>
            <person name="Zhou X."/>
            <person name="Zhu S.C."/>
            <person name="Zhu X."/>
            <person name="Smith H.O."/>
            <person name="Gibbs R.A."/>
            <person name="Myers E.W."/>
            <person name="Rubin G.M."/>
            <person name="Venter J.C."/>
        </authorList>
    </citation>
    <scope>NUCLEOTIDE SEQUENCE [LARGE SCALE GENOMIC DNA]</scope>
    <source>
        <strain>Berkeley</strain>
    </source>
</reference>
<reference key="3">
    <citation type="journal article" date="2002" name="Genome Biol.">
        <title>Annotation of the Drosophila melanogaster euchromatic genome: a systematic review.</title>
        <authorList>
            <person name="Misra S."/>
            <person name="Crosby M.A."/>
            <person name="Mungall C.J."/>
            <person name="Matthews B.B."/>
            <person name="Campbell K.S."/>
            <person name="Hradecky P."/>
            <person name="Huang Y."/>
            <person name="Kaminker J.S."/>
            <person name="Millburn G.H."/>
            <person name="Prochnik S.E."/>
            <person name="Smith C.D."/>
            <person name="Tupy J.L."/>
            <person name="Whitfield E.J."/>
            <person name="Bayraktaroglu L."/>
            <person name="Berman B.P."/>
            <person name="Bettencourt B.R."/>
            <person name="Celniker S.E."/>
            <person name="de Grey A.D.N.J."/>
            <person name="Drysdale R.A."/>
            <person name="Harris N.L."/>
            <person name="Richter J."/>
            <person name="Russo S."/>
            <person name="Schroeder A.J."/>
            <person name="Shu S.Q."/>
            <person name="Stapleton M."/>
            <person name="Yamada C."/>
            <person name="Ashburner M."/>
            <person name="Gelbart W.M."/>
            <person name="Rubin G.M."/>
            <person name="Lewis S.E."/>
        </authorList>
    </citation>
    <scope>GENOME REANNOTATION</scope>
    <source>
        <strain>Berkeley</strain>
    </source>
</reference>
<reference key="4">
    <citation type="submission" date="2011-11" db="EMBL/GenBank/DDBJ databases">
        <authorList>
            <person name="Carlson J."/>
            <person name="Booth B."/>
            <person name="Frise E."/>
            <person name="Park S."/>
            <person name="Wan K."/>
            <person name="Yu C."/>
            <person name="Celniker S."/>
        </authorList>
    </citation>
    <scope>NUCLEOTIDE SEQUENCE [LARGE SCALE MRNA]</scope>
    <source>
        <strain evidence="5">Berkeley</strain>
    </source>
</reference>
<comment type="catalytic activity">
    <reaction>
        <text>Preferential cleavage: Arg-|-Xaa, Lys-|-Xaa.</text>
        <dbReference type="EC" id="3.4.21.4"/>
    </reaction>
</comment>
<comment type="subcellular location">
    <subcellularLocation>
        <location evidence="1">Secreted</location>
        <location evidence="1">Extracellular space</location>
    </subcellularLocation>
</comment>
<comment type="similarity">
    <text evidence="3">Belongs to the peptidase S1 family.</text>
</comment>
<organism>
    <name type="scientific">Drosophila melanogaster</name>
    <name type="common">Fruit fly</name>
    <dbReference type="NCBI Taxonomy" id="7227"/>
    <lineage>
        <taxon>Eukaryota</taxon>
        <taxon>Metazoa</taxon>
        <taxon>Ecdysozoa</taxon>
        <taxon>Arthropoda</taxon>
        <taxon>Hexapoda</taxon>
        <taxon>Insecta</taxon>
        <taxon>Pterygota</taxon>
        <taxon>Neoptera</taxon>
        <taxon>Endopterygota</taxon>
        <taxon>Diptera</taxon>
        <taxon>Brachycera</taxon>
        <taxon>Muscomorpha</taxon>
        <taxon>Ephydroidea</taxon>
        <taxon>Drosophilidae</taxon>
        <taxon>Drosophila</taxon>
        <taxon>Sophophora</taxon>
    </lineage>
</organism>
<feature type="signal peptide" evidence="4">
    <location>
        <begin position="1"/>
        <end position="22"/>
    </location>
</feature>
<feature type="propeptide" id="PRO_0000028269" description="Activation peptide">
    <location>
        <begin position="23"/>
        <end position="30"/>
    </location>
</feature>
<feature type="chain" id="PRO_0000028270" description="Trypsin delta" evidence="2">
    <location>
        <begin position="31"/>
        <end position="253"/>
    </location>
</feature>
<feature type="domain" description="Peptidase S1" evidence="3">
    <location>
        <begin position="31"/>
        <end position="253"/>
    </location>
</feature>
<feature type="active site" description="Charge relay system" evidence="3">
    <location>
        <position position="71"/>
    </location>
</feature>
<feature type="active site" description="Charge relay system" evidence="3">
    <location>
        <position position="116"/>
    </location>
</feature>
<feature type="active site" description="Charge relay system" evidence="3">
    <location>
        <position position="210"/>
    </location>
</feature>
<feature type="disulfide bond" evidence="3">
    <location>
        <begin position="56"/>
        <end position="72"/>
    </location>
</feature>
<feature type="disulfide bond" evidence="3">
    <location>
        <begin position="180"/>
        <end position="197"/>
    </location>
</feature>
<feature type="disulfide bond" evidence="3">
    <location>
        <begin position="206"/>
        <end position="230"/>
    </location>
</feature>
<feature type="sequence conflict" description="In Ref. 1; AAA17449." evidence="4" ref="1">
    <original>A</original>
    <variation>V</variation>
    <location>
        <position position="118"/>
    </location>
</feature>
<feature type="sequence conflict" description="In Ref. 1; AAA17449." evidence="4" ref="1">
    <original>A</original>
    <variation>G</variation>
    <location>
        <position position="148"/>
    </location>
</feature>
<feature type="sequence conflict" description="In Ref. 1; AAA17449." evidence="4" ref="1">
    <original>A</original>
    <variation>S</variation>
    <location>
        <position position="240"/>
    </location>
</feature>
<evidence type="ECO:0000250" key="1">
    <source>
        <dbReference type="UniProtKB" id="P04814"/>
    </source>
</evidence>
<evidence type="ECO:0000255" key="2"/>
<evidence type="ECO:0000255" key="3">
    <source>
        <dbReference type="PROSITE-ProRule" id="PRU00274"/>
    </source>
</evidence>
<evidence type="ECO:0000305" key="4"/>
<evidence type="ECO:0000312" key="5">
    <source>
        <dbReference type="EMBL" id="AET62584.1"/>
    </source>
</evidence>
<evidence type="ECO:0000312" key="6">
    <source>
        <dbReference type="FlyBase" id="FBgn0010358"/>
    </source>
</evidence>
<gene>
    <name evidence="6" type="primary">deltaTry</name>
    <name evidence="6" type="ORF">CG12351</name>
</gene>
<protein>
    <recommendedName>
        <fullName evidence="6">Trypsin delta</fullName>
        <ecNumber evidence="3">3.4.21.4</ecNumber>
    </recommendedName>
</protein>
<accession>C0HKA2</accession>
<accession>G7H855</accession>
<accession>P42276</accession>
<accession>P42277</accession>
<accession>Q8SXZ4</accession>
<accession>Q9V5Y4</accession>
<name>TRYDT_DROME</name>
<keyword id="KW-1015">Disulfide bond</keyword>
<keyword id="KW-0378">Hydrolase</keyword>
<keyword id="KW-0645">Protease</keyword>
<keyword id="KW-1185">Reference proteome</keyword>
<keyword id="KW-0964">Secreted</keyword>
<keyword id="KW-0720">Serine protease</keyword>
<keyword id="KW-0732">Signal</keyword>
<keyword id="KW-0865">Zymogen</keyword>
<dbReference type="EC" id="3.4.21.4" evidence="3"/>
<dbReference type="EMBL" id="U04853">
    <property type="protein sequence ID" value="AAA17449.1"/>
    <property type="molecule type" value="Genomic_DNA"/>
</dbReference>
<dbReference type="EMBL" id="AE013599">
    <property type="protein sequence ID" value="AAF58657.2"/>
    <property type="molecule type" value="Genomic_DNA"/>
</dbReference>
<dbReference type="EMBL" id="BT132779">
    <property type="protein sequence ID" value="AET62584.1"/>
    <property type="molecule type" value="mRNA"/>
</dbReference>
<dbReference type="RefSeq" id="NP_523694.2">
    <property type="nucleotide sequence ID" value="NM_078970.4"/>
</dbReference>
<dbReference type="SMR" id="C0HKA2"/>
<dbReference type="FunCoup" id="C0HKA2">
    <property type="interactions" value="70"/>
</dbReference>
<dbReference type="STRING" id="7227.FBpp0087224"/>
<dbReference type="MEROPS" id="S01.A84"/>
<dbReference type="PaxDb" id="7227-FBpp0087224"/>
<dbReference type="DNASU" id="246404"/>
<dbReference type="EnsemblMetazoa" id="FBtr0088123">
    <property type="protein sequence ID" value="FBpp0087224"/>
    <property type="gene ID" value="FBgn0050031"/>
</dbReference>
<dbReference type="EnsemblMetazoa" id="FBtr0088124">
    <property type="protein sequence ID" value="FBpp0087225"/>
    <property type="gene ID" value="FBgn0010358"/>
</dbReference>
<dbReference type="EnsemblMetazoa" id="FBtr0088159">
    <property type="protein sequence ID" value="FBpp0087255"/>
    <property type="gene ID" value="FBgn0010359"/>
</dbReference>
<dbReference type="GeneID" id="48343"/>
<dbReference type="KEGG" id="dme:Dmel_CG12351"/>
<dbReference type="KEGG" id="dme:Dmel_CG30028"/>
<dbReference type="KEGG" id="dme:Dmel_CG30031"/>
<dbReference type="AGR" id="FB:FBgn0010358"/>
<dbReference type="CTD" id="36221"/>
<dbReference type="CTD" id="48343"/>
<dbReference type="FlyBase" id="FBgn0010358">
    <property type="gene designation" value="deltaTry"/>
</dbReference>
<dbReference type="VEuPathDB" id="VectorBase:FBgn0010358"/>
<dbReference type="VEuPathDB" id="VectorBase:FBgn0010359"/>
<dbReference type="VEuPathDB" id="VectorBase:FBgn0050031"/>
<dbReference type="eggNOG" id="KOG3627">
    <property type="taxonomic scope" value="Eukaryota"/>
</dbReference>
<dbReference type="InParanoid" id="C0HKA2"/>
<dbReference type="OMA" id="QMAFINS"/>
<dbReference type="OrthoDB" id="10059102at2759"/>
<dbReference type="PRO" id="PR:C0HKA2"/>
<dbReference type="Proteomes" id="UP000000803">
    <property type="component" value="Chromosome 2R"/>
</dbReference>
<dbReference type="Bgee" id="FBgn0010358">
    <property type="expression patterns" value="Expressed in larva and 16 other cell types or tissues"/>
</dbReference>
<dbReference type="ExpressionAtlas" id="C0HKA2">
    <property type="expression patterns" value="baseline and differential"/>
</dbReference>
<dbReference type="GO" id="GO:0005829">
    <property type="term" value="C:cytosol"/>
    <property type="evidence" value="ECO:0000314"/>
    <property type="project" value="FlyBase"/>
</dbReference>
<dbReference type="GO" id="GO:0005576">
    <property type="term" value="C:extracellular region"/>
    <property type="evidence" value="ECO:0007669"/>
    <property type="project" value="UniProtKB-SubCell"/>
</dbReference>
<dbReference type="GO" id="GO:0004252">
    <property type="term" value="F:serine-type endopeptidase activity"/>
    <property type="evidence" value="ECO:0000255"/>
    <property type="project" value="FlyBase"/>
</dbReference>
<dbReference type="GO" id="GO:0006508">
    <property type="term" value="P:proteolysis"/>
    <property type="evidence" value="ECO:0007669"/>
    <property type="project" value="UniProtKB-KW"/>
</dbReference>
<dbReference type="CDD" id="cd00190">
    <property type="entry name" value="Tryp_SPc"/>
    <property type="match status" value="1"/>
</dbReference>
<dbReference type="FunFam" id="2.40.10.10:FF:000077">
    <property type="entry name" value="Predicted protein"/>
    <property type="match status" value="1"/>
</dbReference>
<dbReference type="Gene3D" id="2.40.10.10">
    <property type="entry name" value="Trypsin-like serine proteases"/>
    <property type="match status" value="2"/>
</dbReference>
<dbReference type="InterPro" id="IPR050430">
    <property type="entry name" value="Peptidase_S1"/>
</dbReference>
<dbReference type="InterPro" id="IPR009003">
    <property type="entry name" value="Peptidase_S1_PA"/>
</dbReference>
<dbReference type="InterPro" id="IPR043504">
    <property type="entry name" value="Peptidase_S1_PA_chymotrypsin"/>
</dbReference>
<dbReference type="InterPro" id="IPR001314">
    <property type="entry name" value="Peptidase_S1A"/>
</dbReference>
<dbReference type="InterPro" id="IPR001254">
    <property type="entry name" value="Trypsin_dom"/>
</dbReference>
<dbReference type="InterPro" id="IPR018114">
    <property type="entry name" value="TRYPSIN_HIS"/>
</dbReference>
<dbReference type="InterPro" id="IPR033116">
    <property type="entry name" value="TRYPSIN_SER"/>
</dbReference>
<dbReference type="PANTHER" id="PTHR24276:SF91">
    <property type="entry name" value="AT26814P-RELATED"/>
    <property type="match status" value="1"/>
</dbReference>
<dbReference type="PANTHER" id="PTHR24276">
    <property type="entry name" value="POLYSERASE-RELATED"/>
    <property type="match status" value="1"/>
</dbReference>
<dbReference type="Pfam" id="PF00089">
    <property type="entry name" value="Trypsin"/>
    <property type="match status" value="1"/>
</dbReference>
<dbReference type="PRINTS" id="PR00722">
    <property type="entry name" value="CHYMOTRYPSIN"/>
</dbReference>
<dbReference type="SMART" id="SM00020">
    <property type="entry name" value="Tryp_SPc"/>
    <property type="match status" value="1"/>
</dbReference>
<dbReference type="SUPFAM" id="SSF50494">
    <property type="entry name" value="Trypsin-like serine proteases"/>
    <property type="match status" value="1"/>
</dbReference>
<dbReference type="PROSITE" id="PS50240">
    <property type="entry name" value="TRYPSIN_DOM"/>
    <property type="match status" value="1"/>
</dbReference>
<dbReference type="PROSITE" id="PS00134">
    <property type="entry name" value="TRYPSIN_HIS"/>
    <property type="match status" value="1"/>
</dbReference>
<dbReference type="PROSITE" id="PS00135">
    <property type="entry name" value="TRYPSIN_SER"/>
    <property type="match status" value="1"/>
</dbReference>
<sequence length="253" mass="25680">MLKFVILLSAVACALGGTVPEGLLPQLDGRIVGGSATTISSFPWQISLQRSGSHSCGGSIYSSNVIVTAAHCLQSVSASVLQIRAGSSYWSSGGVTFSVSSFKNHEGYNANTMVNDIAIIKINGALTFSSTIKAIGLASSNPANGAAASVSGWGTLSYGSSSIPSQLQYVNVNIVSQSQCASSTYGYGSQIRSTMICAAASGKDACQGDSGGPLVSGGVLVGVVSWGYGCAYSNYPGVYADVAALRSWVISNA</sequence>